<proteinExistence type="inferred from homology"/>
<evidence type="ECO:0000255" key="1">
    <source>
        <dbReference type="HAMAP-Rule" id="MF_00480"/>
    </source>
</evidence>
<evidence type="ECO:0000305" key="2"/>
<keyword id="KW-0687">Ribonucleoprotein</keyword>
<keyword id="KW-0689">Ribosomal protein</keyword>
<keyword id="KW-0694">RNA-binding</keyword>
<keyword id="KW-0699">rRNA-binding</keyword>
<keyword id="KW-0820">tRNA-binding</keyword>
<comment type="function">
    <text evidence="1">One of the primary rRNA binding proteins, it binds directly to 16S rRNA where it nucleates assembly of the head domain of the 30S subunit. Is located at the subunit interface close to the decoding center, probably blocks exit of the E-site tRNA.</text>
</comment>
<comment type="subunit">
    <text evidence="1">Part of the 30S ribosomal subunit. Contacts proteins S9 and S11.</text>
</comment>
<comment type="similarity">
    <text evidence="1">Belongs to the universal ribosomal protein uS7 family.</text>
</comment>
<organism>
    <name type="scientific">Rhodopseudomonas palustris (strain BisA53)</name>
    <dbReference type="NCBI Taxonomy" id="316055"/>
    <lineage>
        <taxon>Bacteria</taxon>
        <taxon>Pseudomonadati</taxon>
        <taxon>Pseudomonadota</taxon>
        <taxon>Alphaproteobacteria</taxon>
        <taxon>Hyphomicrobiales</taxon>
        <taxon>Nitrobacteraceae</taxon>
        <taxon>Rhodopseudomonas</taxon>
    </lineage>
</organism>
<dbReference type="EMBL" id="CP000463">
    <property type="protein sequence ID" value="ABJ07520.1"/>
    <property type="molecule type" value="Genomic_DNA"/>
</dbReference>
<dbReference type="SMR" id="Q07KL4"/>
<dbReference type="STRING" id="316055.RPE_3590"/>
<dbReference type="KEGG" id="rpe:RPE_3590"/>
<dbReference type="eggNOG" id="COG0049">
    <property type="taxonomic scope" value="Bacteria"/>
</dbReference>
<dbReference type="HOGENOM" id="CLU_072226_1_1_5"/>
<dbReference type="OrthoDB" id="9807653at2"/>
<dbReference type="GO" id="GO:0015935">
    <property type="term" value="C:small ribosomal subunit"/>
    <property type="evidence" value="ECO:0007669"/>
    <property type="project" value="InterPro"/>
</dbReference>
<dbReference type="GO" id="GO:0019843">
    <property type="term" value="F:rRNA binding"/>
    <property type="evidence" value="ECO:0007669"/>
    <property type="project" value="UniProtKB-UniRule"/>
</dbReference>
<dbReference type="GO" id="GO:0003735">
    <property type="term" value="F:structural constituent of ribosome"/>
    <property type="evidence" value="ECO:0007669"/>
    <property type="project" value="InterPro"/>
</dbReference>
<dbReference type="GO" id="GO:0000049">
    <property type="term" value="F:tRNA binding"/>
    <property type="evidence" value="ECO:0007669"/>
    <property type="project" value="UniProtKB-UniRule"/>
</dbReference>
<dbReference type="GO" id="GO:0006412">
    <property type="term" value="P:translation"/>
    <property type="evidence" value="ECO:0007669"/>
    <property type="project" value="UniProtKB-UniRule"/>
</dbReference>
<dbReference type="CDD" id="cd14869">
    <property type="entry name" value="uS7_Bacteria"/>
    <property type="match status" value="1"/>
</dbReference>
<dbReference type="FunFam" id="1.10.455.10:FF:000001">
    <property type="entry name" value="30S ribosomal protein S7"/>
    <property type="match status" value="1"/>
</dbReference>
<dbReference type="Gene3D" id="1.10.455.10">
    <property type="entry name" value="Ribosomal protein S7 domain"/>
    <property type="match status" value="1"/>
</dbReference>
<dbReference type="HAMAP" id="MF_00480_B">
    <property type="entry name" value="Ribosomal_uS7_B"/>
    <property type="match status" value="1"/>
</dbReference>
<dbReference type="InterPro" id="IPR000235">
    <property type="entry name" value="Ribosomal_uS7"/>
</dbReference>
<dbReference type="InterPro" id="IPR005717">
    <property type="entry name" value="Ribosomal_uS7_bac/org-type"/>
</dbReference>
<dbReference type="InterPro" id="IPR020606">
    <property type="entry name" value="Ribosomal_uS7_CS"/>
</dbReference>
<dbReference type="InterPro" id="IPR023798">
    <property type="entry name" value="Ribosomal_uS7_dom"/>
</dbReference>
<dbReference type="InterPro" id="IPR036823">
    <property type="entry name" value="Ribosomal_uS7_dom_sf"/>
</dbReference>
<dbReference type="NCBIfam" id="TIGR01029">
    <property type="entry name" value="rpsG_bact"/>
    <property type="match status" value="1"/>
</dbReference>
<dbReference type="PANTHER" id="PTHR11205">
    <property type="entry name" value="RIBOSOMAL PROTEIN S7"/>
    <property type="match status" value="1"/>
</dbReference>
<dbReference type="Pfam" id="PF00177">
    <property type="entry name" value="Ribosomal_S7"/>
    <property type="match status" value="1"/>
</dbReference>
<dbReference type="PIRSF" id="PIRSF002122">
    <property type="entry name" value="RPS7p_RPS7a_RPS5e_RPS7o"/>
    <property type="match status" value="1"/>
</dbReference>
<dbReference type="SUPFAM" id="SSF47973">
    <property type="entry name" value="Ribosomal protein S7"/>
    <property type="match status" value="1"/>
</dbReference>
<dbReference type="PROSITE" id="PS00052">
    <property type="entry name" value="RIBOSOMAL_S7"/>
    <property type="match status" value="1"/>
</dbReference>
<protein>
    <recommendedName>
        <fullName evidence="1">Small ribosomal subunit protein uS7</fullName>
    </recommendedName>
    <alternativeName>
        <fullName evidence="2">30S ribosomal protein S7</fullName>
    </alternativeName>
</protein>
<accession>Q07KL4</accession>
<sequence>MSRRHAAEKREVLPDPKFGNIVITKFMNSVMYAGKKSVAETIVYGALGLIEGKTKQDPLSVFVQALDNVMPTIEVRSRRVGGATYQVPVEVRSARRQALGIRWLITAARGRNEKTMTERLSAELLDASNNRGNAVKKREDVHKMAEANRAFSHYRW</sequence>
<feature type="chain" id="PRO_1000014270" description="Small ribosomal subunit protein uS7">
    <location>
        <begin position="1"/>
        <end position="156"/>
    </location>
</feature>
<gene>
    <name evidence="1" type="primary">rpsG</name>
    <name type="ordered locus">RPE_3590</name>
</gene>
<name>RS7_RHOP5</name>
<reference key="1">
    <citation type="submission" date="2006-09" db="EMBL/GenBank/DDBJ databases">
        <title>Complete sequence of Rhodopseudomonas palustris BisA53.</title>
        <authorList>
            <consortium name="US DOE Joint Genome Institute"/>
            <person name="Copeland A."/>
            <person name="Lucas S."/>
            <person name="Lapidus A."/>
            <person name="Barry K."/>
            <person name="Detter J.C."/>
            <person name="Glavina del Rio T."/>
            <person name="Hammon N."/>
            <person name="Israni S."/>
            <person name="Dalin E."/>
            <person name="Tice H."/>
            <person name="Pitluck S."/>
            <person name="Chain P."/>
            <person name="Malfatti S."/>
            <person name="Shin M."/>
            <person name="Vergez L."/>
            <person name="Schmutz J."/>
            <person name="Larimer F."/>
            <person name="Land M."/>
            <person name="Hauser L."/>
            <person name="Pelletier D.A."/>
            <person name="Kyrpides N."/>
            <person name="Kim E."/>
            <person name="Harwood C.S."/>
            <person name="Oda Y."/>
            <person name="Richardson P."/>
        </authorList>
    </citation>
    <scope>NUCLEOTIDE SEQUENCE [LARGE SCALE GENOMIC DNA]</scope>
    <source>
        <strain>BisA53</strain>
    </source>
</reference>